<reference key="1">
    <citation type="journal article" date="2005" name="J. Cell Sci.">
        <title>Localization of all seven messenger RNAs for the actin-polymerization nucleator Arp2/3 complex in the protrusions of fibroblasts.</title>
        <authorList>
            <person name="Mingle L.A."/>
            <person name="Okuhama N.N."/>
            <person name="Shi J."/>
            <person name="Singer R.H."/>
            <person name="Condeelis J."/>
            <person name="Liu G."/>
        </authorList>
    </citation>
    <scope>NUCLEOTIDE SEQUENCE [MRNA]</scope>
    <scope>TISSUE SPECIFICITY</scope>
    <source>
        <tissue>Brain</tissue>
    </source>
</reference>
<organism>
    <name type="scientific">Gallus gallus</name>
    <name type="common">Chicken</name>
    <dbReference type="NCBI Taxonomy" id="9031"/>
    <lineage>
        <taxon>Eukaryota</taxon>
        <taxon>Metazoa</taxon>
        <taxon>Chordata</taxon>
        <taxon>Craniata</taxon>
        <taxon>Vertebrata</taxon>
        <taxon>Euteleostomi</taxon>
        <taxon>Archelosauria</taxon>
        <taxon>Archosauria</taxon>
        <taxon>Dinosauria</taxon>
        <taxon>Saurischia</taxon>
        <taxon>Theropoda</taxon>
        <taxon>Coelurosauria</taxon>
        <taxon>Aves</taxon>
        <taxon>Neognathae</taxon>
        <taxon>Galloanserae</taxon>
        <taxon>Galliformes</taxon>
        <taxon>Phasianidae</taxon>
        <taxon>Phasianinae</taxon>
        <taxon>Gallus</taxon>
    </lineage>
</organism>
<dbReference type="EMBL" id="AF288600">
    <property type="protein sequence ID" value="AAK83060.1"/>
    <property type="molecule type" value="mRNA"/>
</dbReference>
<dbReference type="RefSeq" id="NP_989638.1">
    <property type="nucleotide sequence ID" value="NM_204307.2"/>
</dbReference>
<dbReference type="SMR" id="Q90WD0"/>
<dbReference type="FunCoup" id="Q90WD0">
    <property type="interactions" value="3380"/>
</dbReference>
<dbReference type="STRING" id="9031.ENSGALP00000019832"/>
<dbReference type="PaxDb" id="9031-ENSGALP00000019832"/>
<dbReference type="Ensembl" id="ENSGALT00010046870.1">
    <property type="protein sequence ID" value="ENSGALP00010027884.1"/>
    <property type="gene ID" value="ENSGALG00010019319.1"/>
</dbReference>
<dbReference type="GeneID" id="374197"/>
<dbReference type="KEGG" id="gga:374197"/>
<dbReference type="CTD" id="10096"/>
<dbReference type="VEuPathDB" id="HostDB:geneid_374197"/>
<dbReference type="eggNOG" id="KOG0678">
    <property type="taxonomic scope" value="Eukaryota"/>
</dbReference>
<dbReference type="GeneTree" id="ENSGT00940000155065"/>
<dbReference type="HOGENOM" id="CLU_027965_3_0_1"/>
<dbReference type="InParanoid" id="Q90WD0"/>
<dbReference type="OMA" id="GIHYPIR"/>
<dbReference type="OrthoDB" id="421448at2759"/>
<dbReference type="PhylomeDB" id="Q90WD0"/>
<dbReference type="TreeFam" id="TF300644"/>
<dbReference type="Reactome" id="R-GGA-2029482">
    <property type="pathway name" value="Regulation of actin dynamics for phagocytic cup formation"/>
</dbReference>
<dbReference type="Reactome" id="R-GGA-3928662">
    <property type="pathway name" value="EPHB-mediated forward signaling"/>
</dbReference>
<dbReference type="Reactome" id="R-GGA-5663213">
    <property type="pathway name" value="RHO GTPases Activate WASPs and WAVEs"/>
</dbReference>
<dbReference type="Reactome" id="R-GGA-8856828">
    <property type="pathway name" value="Clathrin-mediated endocytosis"/>
</dbReference>
<dbReference type="PRO" id="PR:Q90WD0"/>
<dbReference type="Proteomes" id="UP000000539">
    <property type="component" value="Chromosome 7"/>
</dbReference>
<dbReference type="Bgee" id="ENSGALG00000012159">
    <property type="expression patterns" value="Expressed in spleen and 14 other cell types or tissues"/>
</dbReference>
<dbReference type="GO" id="GO:0005885">
    <property type="term" value="C:Arp2/3 protein complex"/>
    <property type="evidence" value="ECO:0000250"/>
    <property type="project" value="UniProtKB"/>
</dbReference>
<dbReference type="GO" id="GO:0042995">
    <property type="term" value="C:cell projection"/>
    <property type="evidence" value="ECO:0007669"/>
    <property type="project" value="UniProtKB-SubCell"/>
</dbReference>
<dbReference type="GO" id="GO:0005737">
    <property type="term" value="C:cytoplasm"/>
    <property type="evidence" value="ECO:0000250"/>
    <property type="project" value="UniProtKB"/>
</dbReference>
<dbReference type="GO" id="GO:0005634">
    <property type="term" value="C:nucleus"/>
    <property type="evidence" value="ECO:0000250"/>
    <property type="project" value="UniProtKB"/>
</dbReference>
<dbReference type="GO" id="GO:0035861">
    <property type="term" value="C:site of double-strand break"/>
    <property type="evidence" value="ECO:0000250"/>
    <property type="project" value="UniProtKB"/>
</dbReference>
<dbReference type="GO" id="GO:0003779">
    <property type="term" value="F:actin binding"/>
    <property type="evidence" value="ECO:0007669"/>
    <property type="project" value="UniProtKB-KW"/>
</dbReference>
<dbReference type="GO" id="GO:0005524">
    <property type="term" value="F:ATP binding"/>
    <property type="evidence" value="ECO:0007669"/>
    <property type="project" value="UniProtKB-KW"/>
</dbReference>
<dbReference type="GO" id="GO:0034314">
    <property type="term" value="P:Arp2/3 complex-mediated actin nucleation"/>
    <property type="evidence" value="ECO:0000250"/>
    <property type="project" value="UniProtKB"/>
</dbReference>
<dbReference type="GO" id="GO:0045944">
    <property type="term" value="P:positive regulation of transcription by RNA polymerase II"/>
    <property type="evidence" value="ECO:0000250"/>
    <property type="project" value="UniProtKB"/>
</dbReference>
<dbReference type="CDD" id="cd10221">
    <property type="entry name" value="ASKHA_NBD_Arp3-like"/>
    <property type="match status" value="1"/>
</dbReference>
<dbReference type="FunFam" id="3.30.420.40:FF:000029">
    <property type="entry name" value="Actin-related protein 3"/>
    <property type="match status" value="1"/>
</dbReference>
<dbReference type="FunFam" id="3.30.420.40:FF:000315">
    <property type="entry name" value="Actin-related protein 3"/>
    <property type="match status" value="1"/>
</dbReference>
<dbReference type="FunFam" id="3.30.420.40:FF:000803">
    <property type="entry name" value="Actin-related protein 3"/>
    <property type="match status" value="1"/>
</dbReference>
<dbReference type="FunFam" id="3.90.640.10:FF:000006">
    <property type="entry name" value="Actin-related protein 3 (ARP3)"/>
    <property type="match status" value="1"/>
</dbReference>
<dbReference type="FunFam" id="2.30.36.70:FF:000002">
    <property type="entry name" value="actin-related protein 3 isoform X1"/>
    <property type="match status" value="1"/>
</dbReference>
<dbReference type="Gene3D" id="3.30.420.40">
    <property type="match status" value="2"/>
</dbReference>
<dbReference type="Gene3D" id="2.30.36.70">
    <property type="entry name" value="Actin, Chain A, domain 2"/>
    <property type="match status" value="1"/>
</dbReference>
<dbReference type="Gene3D" id="3.90.640.10">
    <property type="entry name" value="Actin, Chain A, domain 4"/>
    <property type="match status" value="1"/>
</dbReference>
<dbReference type="InterPro" id="IPR004000">
    <property type="entry name" value="Actin"/>
</dbReference>
<dbReference type="InterPro" id="IPR020902">
    <property type="entry name" value="Actin/actin-like_CS"/>
</dbReference>
<dbReference type="InterPro" id="IPR043129">
    <property type="entry name" value="ATPase_NBD"/>
</dbReference>
<dbReference type="PANTHER" id="PTHR11937">
    <property type="entry name" value="ACTIN"/>
    <property type="match status" value="1"/>
</dbReference>
<dbReference type="Pfam" id="PF00022">
    <property type="entry name" value="Actin"/>
    <property type="match status" value="2"/>
</dbReference>
<dbReference type="SMART" id="SM00268">
    <property type="entry name" value="ACTIN"/>
    <property type="match status" value="1"/>
</dbReference>
<dbReference type="SUPFAM" id="SSF53067">
    <property type="entry name" value="Actin-like ATPase domain"/>
    <property type="match status" value="2"/>
</dbReference>
<dbReference type="PROSITE" id="PS01132">
    <property type="entry name" value="ACTINS_ACT_LIKE"/>
    <property type="match status" value="1"/>
</dbReference>
<name>ARP3_CHICK</name>
<comment type="function">
    <text evidence="2 3">ATP-binding component of the Arp2/3 complex, a multiprotein complex that mediates actin polymerization upon stimulation by nucleation-promoting factor (NPF). The Arp2/3 complex mediates the formation of branched actin networks in the cytoplasm, providing the force for cell motility (By similarity). Seems to contact the pointed end of the daughter actin filament (By similarity). In addition to its role in the cytoplasmic cytoskeleton, the Arp2/3 complex also promotes actin polymerization in the nucleus, thereby regulating gene transcription and repair of damaged DNA (By similarity). The Arp2/3 complex promotes homologous recombination (HR) repair in response to DNA damage by promoting nuclear actin polymerization, leading to drive motility of double-strand breaks (DSBs) (By similarity).</text>
</comment>
<comment type="subunit">
    <text evidence="3">Component of the Arp2/3 complex composed of ACTR2/ARP2, ACTR3/ARP3, ARPC1B/p41-ARC, ARPC2/p34-ARC, ARPC3/p21-ARC, ARPC4/p20-ARC and ARPC5/p16-ARC.</text>
</comment>
<comment type="subcellular location">
    <subcellularLocation>
        <location evidence="3">Cytoplasm</location>
        <location evidence="3">Cytoskeleton</location>
    </subcellularLocation>
    <subcellularLocation>
        <location evidence="3">Cell projection</location>
    </subcellularLocation>
    <subcellularLocation>
        <location evidence="2">Nucleus</location>
    </subcellularLocation>
</comment>
<comment type="tissue specificity">
    <text evidence="4">Detected in fibroblasts.</text>
</comment>
<comment type="similarity">
    <text evidence="5">Belongs to the actin family. ARP3 subfamily.</text>
</comment>
<feature type="initiator methionine" description="Removed" evidence="1">
    <location>
        <position position="1"/>
    </location>
</feature>
<feature type="chain" id="PRO_0000342357" description="Actin-related protein 3">
    <location>
        <begin position="2"/>
        <end position="418"/>
    </location>
</feature>
<feature type="modified residue" description="N-acetylalanine" evidence="1">
    <location>
        <position position="2"/>
    </location>
</feature>
<keyword id="KW-0007">Acetylation</keyword>
<keyword id="KW-0009">Actin-binding</keyword>
<keyword id="KW-0067">ATP-binding</keyword>
<keyword id="KW-0966">Cell projection</keyword>
<keyword id="KW-0963">Cytoplasm</keyword>
<keyword id="KW-0206">Cytoskeleton</keyword>
<keyword id="KW-0547">Nucleotide-binding</keyword>
<keyword id="KW-0539">Nucleus</keyword>
<keyword id="KW-1185">Reference proteome</keyword>
<accession>Q90WD0</accession>
<evidence type="ECO:0000250" key="1"/>
<evidence type="ECO:0000250" key="2">
    <source>
        <dbReference type="UniProtKB" id="P61158"/>
    </source>
</evidence>
<evidence type="ECO:0000250" key="3">
    <source>
        <dbReference type="UniProtKB" id="Q801P7"/>
    </source>
</evidence>
<evidence type="ECO:0000269" key="4">
    <source>
    </source>
</evidence>
<evidence type="ECO:0000305" key="5"/>
<protein>
    <recommendedName>
        <fullName>Actin-related protein 3</fullName>
    </recommendedName>
    <alternativeName>
        <fullName>Actin-like protein 3</fullName>
    </alternativeName>
</protein>
<sequence length="418" mass="47421">MAGRLPACVVDCGTGYTKLGYAGNTEPQFIIPSCIAIKESAKVVDQAQRRVLKGVDDLDFFIGDEAIEKPTYATKWPIRHGIVEDWDLMERFMEQVIFKYLRAEPEDHYFLLTEPPLNTPENREYTAEIMFESFNVPGLYIAVQAVLALAASWTSRQVGERTLTGTVIDSGDGVTHVIPVAEGYVIGSCIKHIPIAGRDITYFIQQLLREREVGIPPEQSLETAKAVKERFSYVCPDLVKEFNKYDTDGTKWIKQYTGINAISKKEFTIDVGYERFLGPEIFFHPEFANPDFTQPISEVVDEVIQNCPIDVRRPLYKNIVLSGGSTMFRDFGRRLQRDLKRTVDARLKLSEELSGGRLKPKPIDVQVITHHMQRYAVWFGGSMLASTPEFYQVCHTKKDYEEIGPSICRHNPVFGVMS</sequence>
<gene>
    <name type="primary">ACTR3</name>
    <name type="synonym">ARP3</name>
</gene>
<proteinExistence type="evidence at transcript level"/>